<dbReference type="EMBL" id="AB169814">
    <property type="protein sequence ID" value="BAE01895.1"/>
    <property type="molecule type" value="mRNA"/>
</dbReference>
<dbReference type="EMBL" id="AB179364">
    <property type="protein sequence ID" value="BAE02415.1"/>
    <property type="status" value="ALT_FRAME"/>
    <property type="molecule type" value="mRNA"/>
</dbReference>
<dbReference type="RefSeq" id="XP_005571821.1">
    <property type="nucleotide sequence ID" value="XM_005571764.4"/>
</dbReference>
<dbReference type="SMR" id="Q4R4T0"/>
<dbReference type="STRING" id="9541.ENSMFAP00000034316"/>
<dbReference type="GlyCosmos" id="Q4R4T0">
    <property type="glycosylation" value="1 site, No reported glycans"/>
</dbReference>
<dbReference type="GeneID" id="101925832"/>
<dbReference type="KEGG" id="mcf:101925832"/>
<dbReference type="CTD" id="6184"/>
<dbReference type="VEuPathDB" id="HostDB:ENSMFAG00000003642"/>
<dbReference type="eggNOG" id="KOG2291">
    <property type="taxonomic scope" value="Eukaryota"/>
</dbReference>
<dbReference type="OMA" id="RYEYARE"/>
<dbReference type="OrthoDB" id="7139at314294"/>
<dbReference type="UniPathway" id="UPA00378"/>
<dbReference type="Proteomes" id="UP000233100">
    <property type="component" value="Chromosome 2"/>
</dbReference>
<dbReference type="GO" id="GO:0008250">
    <property type="term" value="C:oligosaccharyltransferase complex"/>
    <property type="evidence" value="ECO:0007669"/>
    <property type="project" value="TreeGrafter"/>
</dbReference>
<dbReference type="GO" id="GO:0018279">
    <property type="term" value="P:protein N-linked glycosylation via asparagine"/>
    <property type="evidence" value="ECO:0007669"/>
    <property type="project" value="TreeGrafter"/>
</dbReference>
<dbReference type="InterPro" id="IPR007676">
    <property type="entry name" value="Ribophorin_I"/>
</dbReference>
<dbReference type="PANTHER" id="PTHR21049:SF0">
    <property type="entry name" value="DOLICHYL-DIPHOSPHOOLIGOSACCHARIDE--PROTEIN GLYCOSYLTRANSFERASE SUBUNIT 1"/>
    <property type="match status" value="1"/>
</dbReference>
<dbReference type="PANTHER" id="PTHR21049">
    <property type="entry name" value="RIBOPHORIN I"/>
    <property type="match status" value="1"/>
</dbReference>
<dbReference type="Pfam" id="PF04597">
    <property type="entry name" value="Ribophorin_I"/>
    <property type="match status" value="1"/>
</dbReference>
<protein>
    <recommendedName>
        <fullName evidence="3">Dolichyl-diphosphooligosaccharide--protein glycosyltransferase subunit 1</fullName>
    </recommendedName>
    <alternativeName>
        <fullName>Dolichyl-diphosphooligosaccharide--protein glycosyltransferase 67 kDa subunit</fullName>
    </alternativeName>
    <alternativeName>
        <fullName>Ribophorin I</fullName>
        <shortName>RPN-I</shortName>
    </alternativeName>
    <alternativeName>
        <fullName>Ribophorin-1</fullName>
    </alternativeName>
</protein>
<keyword id="KW-0007">Acetylation</keyword>
<keyword id="KW-0256">Endoplasmic reticulum</keyword>
<keyword id="KW-0325">Glycoprotein</keyword>
<keyword id="KW-1017">Isopeptide bond</keyword>
<keyword id="KW-0472">Membrane</keyword>
<keyword id="KW-1185">Reference proteome</keyword>
<keyword id="KW-0732">Signal</keyword>
<keyword id="KW-0812">Transmembrane</keyword>
<keyword id="KW-1133">Transmembrane helix</keyword>
<keyword id="KW-0832">Ubl conjugation</keyword>
<organism>
    <name type="scientific">Macaca fascicularis</name>
    <name type="common">Crab-eating macaque</name>
    <name type="synonym">Cynomolgus monkey</name>
    <dbReference type="NCBI Taxonomy" id="9541"/>
    <lineage>
        <taxon>Eukaryota</taxon>
        <taxon>Metazoa</taxon>
        <taxon>Chordata</taxon>
        <taxon>Craniata</taxon>
        <taxon>Vertebrata</taxon>
        <taxon>Euteleostomi</taxon>
        <taxon>Mammalia</taxon>
        <taxon>Eutheria</taxon>
        <taxon>Euarchontoglires</taxon>
        <taxon>Primates</taxon>
        <taxon>Haplorrhini</taxon>
        <taxon>Catarrhini</taxon>
        <taxon>Cercopithecidae</taxon>
        <taxon>Cercopithecinae</taxon>
        <taxon>Macaca</taxon>
    </lineage>
</organism>
<gene>
    <name evidence="3" type="primary">RPN1</name>
    <name type="ORF">QccE-21639</name>
    <name type="ORF">QtsA-18349</name>
</gene>
<name>RPN1_MACFA</name>
<sequence length="607" mass="68732">MEAPVARLFLLLLLGSWTPAPGSASSEAPPLINEDVKRTVDLSSHLAKVTAEVVLAHLGGSSTSRATSFLLALEPELEARLAHLGVQVKGEDEEDNNLEVRETKIKGKSGRFFIVKLPVALDPGAKISVIVETVYTHVLQPYPTQITQSEKQFVVFEGNHYFYSPYPTKTQTMRVKLASRNVESYTKLGNPTRSEDLLDYGPFRDVPAYSQDTFKVHYENNSPFLTITSMTRVIEVSHWGNIAVEENVDLKHTGAVLKGPFSRYDYQRQPDSGISSIRSFKTILPAAAQDVYYRDEIGNVSTSHLLILDDSVEMEIRPRFPLFGGWKTHYIVGYNLPSYEYLYNLGDQYALKMRFVDHVFDEQVIDSLTVKIILPEGAKNIEIDSPYEISRAPDELHYTYLDTFGRPVIVAYKKNLVEQHIQDIVVHYTFNKVLMLQEPLLVVAAFYILFFTVIIYVRLDFSITKDPAAEARMKVACITEQVLTLVNKRIGLYRHFDETVNRYKQSRDISTLNSGKKSLETEHKALTSEIALLQSRLKTEGSDLCDRVSEMQKLDAQVKELVLKSAVEAERLVAGKLKKDTYIENEKLISGKRQELVTKIDHILDAL</sequence>
<comment type="function">
    <text evidence="2">Subunit of the oligosaccharyl transferase (OST) complex that catalyzes the initial transfer of a defined glycan (Glc(3)Man(9)GlcNAc(2) in eukaryotes) from the lipid carrier dolichol-pyrophosphate to an asparagine residue within an Asn-X-Ser/Thr consensus motif in nascent polypeptide chains, the first step in protein N-glycosylation. N-glycosylation occurs cotranslationally and the complex associates with the Sec61 complex at the channel-forming translocon complex that mediates protein translocation across the endoplasmic reticulum (ER). All subunits are required for a maximal enzyme activity.</text>
</comment>
<comment type="pathway">
    <text evidence="3">Protein modification; protein glycosylation.</text>
</comment>
<comment type="subunit">
    <text evidence="2 4">Component of the oligosaccharyltransferase (OST) complex. OST exists in two different complex forms which contain common core subunits RPN1, RPN2, OST48, OST4, DAD1 and TMEM258, either STT3A or STT3B as catalytic subunits, and form-specific accessory subunits. STT3A complex assembly occurs through the formation of 3 subcomplexes. Subcomplex 1 contains RPN1 and TMEM258, subcomplex 2 contains the STT3A-specific subunits STT3A, DC2/OSTC, and KCP2 as well as the core subunit OST4, and subcomplex 3 contains RPN2, DAD1, and OST48. The STT3A complex can form stable complexes with the Sec61 complex or with both the Sec61 and TRAP complexes (By similarity). Interacts with TMEM35A/NACHO (By similarity).</text>
</comment>
<comment type="subcellular location">
    <subcellularLocation>
        <location evidence="2">Endoplasmic reticulum membrane</location>
        <topology evidence="2">Single-pass type I membrane protein</topology>
    </subcellularLocation>
</comment>
<comment type="PTM">
    <text evidence="3">Ubiquitinated by the ECS(ASB11) complex.</text>
</comment>
<comment type="PTM">
    <text evidence="3">Ufmylated by UFL1 in response to endoplasmic reticulum stress, promoting reticulophagy of endoplasmic reticulum sheets.</text>
</comment>
<comment type="similarity">
    <text evidence="6">Belongs to the OST1 family.</text>
</comment>
<comment type="sequence caution" evidence="6">
    <conflict type="frameshift">
        <sequence resource="EMBL-CDS" id="BAE02415"/>
    </conflict>
</comment>
<proteinExistence type="evidence at transcript level"/>
<reference key="1">
    <citation type="submission" date="2005-06" db="EMBL/GenBank/DDBJ databases">
        <title>DNA sequences of macaque genes expressed in brain or testis and its evolutionary implications.</title>
        <authorList>
            <consortium name="International consortium for macaque cDNA sequencing and analysis"/>
        </authorList>
    </citation>
    <scope>NUCLEOTIDE SEQUENCE [LARGE SCALE MRNA]</scope>
    <source>
        <tissue>Brain cortex</tissue>
        <tissue>Testis</tissue>
    </source>
</reference>
<evidence type="ECO:0000250" key="1"/>
<evidence type="ECO:0000250" key="2">
    <source>
        <dbReference type="UniProtKB" id="E2RQ08"/>
    </source>
</evidence>
<evidence type="ECO:0000250" key="3">
    <source>
        <dbReference type="UniProtKB" id="P04843"/>
    </source>
</evidence>
<evidence type="ECO:0000250" key="4">
    <source>
        <dbReference type="UniProtKB" id="Q91YQ5"/>
    </source>
</evidence>
<evidence type="ECO:0000255" key="5"/>
<evidence type="ECO:0000305" key="6"/>
<feature type="signal peptide" evidence="1">
    <location>
        <begin position="1"/>
        <end position="23"/>
    </location>
</feature>
<feature type="chain" id="PRO_0000331253" description="Dolichyl-diphosphooligosaccharide--protein glycosyltransferase subunit 1">
    <location>
        <begin position="24"/>
        <end position="607"/>
    </location>
</feature>
<feature type="topological domain" description="Lumenal" evidence="5">
    <location>
        <begin position="24"/>
        <end position="434"/>
    </location>
</feature>
<feature type="transmembrane region" description="Helical" evidence="5">
    <location>
        <begin position="435"/>
        <end position="455"/>
    </location>
</feature>
<feature type="topological domain" description="Cytoplasmic" evidence="1">
    <location>
        <begin position="456"/>
        <end position="607"/>
    </location>
</feature>
<feature type="modified residue" description="N6-acetyllysine" evidence="3">
    <location>
        <position position="187"/>
    </location>
</feature>
<feature type="modified residue" description="N6-acetyllysine; alternate" evidence="4">
    <location>
        <position position="538"/>
    </location>
</feature>
<feature type="glycosylation site" description="N-linked (GlcNAc...) asparagine" evidence="5">
    <location>
        <position position="299"/>
    </location>
</feature>
<feature type="cross-link" description="Glycyl lysine isopeptide (Lys-Gly) (interchain with G-Cter in SUMO2); alternate" evidence="3">
    <location>
        <position position="538"/>
    </location>
</feature>
<feature type="sequence conflict" description="In Ref. 1; BAE02415." evidence="6" ref="1">
    <original>A</original>
    <variation>S</variation>
    <location>
        <position position="24"/>
    </location>
</feature>
<feature type="sequence conflict" description="In Ref. 1; BAE02415." evidence="6" ref="1">
    <original>E</original>
    <variation>G</variation>
    <location>
        <position position="34"/>
    </location>
</feature>
<feature type="sequence conflict" description="In Ref. 1; BAE02415." evidence="6" ref="1">
    <original>T</original>
    <variation>A</variation>
    <location>
        <position position="328"/>
    </location>
</feature>
<accession>Q4R4T0</accession>
<accession>Q4R3A2</accession>